<gene>
    <name type="primary">mspC</name>
</gene>
<dbReference type="EC" id="3.4.24.36"/>
<dbReference type="EMBL" id="AJ495008">
    <property type="protein sequence ID" value="CAD42817.1"/>
    <property type="molecule type" value="Genomic_DNA"/>
</dbReference>
<dbReference type="EMBL" id="AJ495009">
    <property type="protein sequence ID" value="CAD42818.1"/>
    <property type="molecule type" value="Genomic_DNA"/>
</dbReference>
<dbReference type="SMR" id="Q8MNZ1"/>
<dbReference type="MEROPS" id="M08.001"/>
<dbReference type="GlyConnect" id="334">
    <property type="glycosylation" value="2 N-Linked glycans"/>
</dbReference>
<dbReference type="GlyCosmos" id="Q8MNZ1">
    <property type="glycosylation" value="7 sites, 4 glycans"/>
</dbReference>
<dbReference type="VEuPathDB" id="TriTrypDB:LTRL590_280010900"/>
<dbReference type="BRENDA" id="3.4.24.36">
    <property type="organism ID" value="2957"/>
</dbReference>
<dbReference type="GO" id="GO:0005737">
    <property type="term" value="C:cytoplasm"/>
    <property type="evidence" value="ECO:0007669"/>
    <property type="project" value="TreeGrafter"/>
</dbReference>
<dbReference type="GO" id="GO:0016020">
    <property type="term" value="C:membrane"/>
    <property type="evidence" value="ECO:0007669"/>
    <property type="project" value="UniProtKB-SubCell"/>
</dbReference>
<dbReference type="GO" id="GO:0046872">
    <property type="term" value="F:metal ion binding"/>
    <property type="evidence" value="ECO:0007669"/>
    <property type="project" value="UniProtKB-KW"/>
</dbReference>
<dbReference type="GO" id="GO:0004222">
    <property type="term" value="F:metalloendopeptidase activity"/>
    <property type="evidence" value="ECO:0007669"/>
    <property type="project" value="InterPro"/>
</dbReference>
<dbReference type="GO" id="GO:0007155">
    <property type="term" value="P:cell adhesion"/>
    <property type="evidence" value="ECO:0007669"/>
    <property type="project" value="UniProtKB-KW"/>
</dbReference>
<dbReference type="GO" id="GO:0006508">
    <property type="term" value="P:proteolysis"/>
    <property type="evidence" value="ECO:0007669"/>
    <property type="project" value="UniProtKB-KW"/>
</dbReference>
<dbReference type="FunFam" id="3.90.132.10:FF:000001">
    <property type="entry name" value="leishmanolysin-like peptidase isoform X2"/>
    <property type="match status" value="1"/>
</dbReference>
<dbReference type="FunFam" id="3.10.170.20:FF:000005">
    <property type="entry name" value="MSP-A1 surface protease homolog"/>
    <property type="match status" value="1"/>
</dbReference>
<dbReference type="Gene3D" id="3.10.170.20">
    <property type="match status" value="1"/>
</dbReference>
<dbReference type="Gene3D" id="3.90.132.10">
    <property type="entry name" value="Leishmanolysin , domain 2"/>
    <property type="match status" value="1"/>
</dbReference>
<dbReference type="Gene3D" id="2.10.55.10">
    <property type="entry name" value="Leishmanolysin domain 3"/>
    <property type="match status" value="1"/>
</dbReference>
<dbReference type="Gene3D" id="2.30.34.10">
    <property type="entry name" value="Leishmanolysin domain 4"/>
    <property type="match status" value="1"/>
</dbReference>
<dbReference type="InterPro" id="IPR001577">
    <property type="entry name" value="Peptidase_M8"/>
</dbReference>
<dbReference type="PANTHER" id="PTHR10942">
    <property type="entry name" value="LEISHMANOLYSIN-LIKE PEPTIDASE"/>
    <property type="match status" value="1"/>
</dbReference>
<dbReference type="PANTHER" id="PTHR10942:SF0">
    <property type="entry name" value="LEISHMANOLYSIN-LIKE PEPTIDASE"/>
    <property type="match status" value="1"/>
</dbReference>
<dbReference type="Pfam" id="PF01457">
    <property type="entry name" value="Peptidase_M8"/>
    <property type="match status" value="1"/>
</dbReference>
<dbReference type="PRINTS" id="PR00782">
    <property type="entry name" value="LSHMANOLYSIN"/>
</dbReference>
<dbReference type="SUPFAM" id="SSF55486">
    <property type="entry name" value="Metalloproteases ('zincins'), catalytic domain"/>
    <property type="match status" value="1"/>
</dbReference>
<dbReference type="PROSITE" id="PS00142">
    <property type="entry name" value="ZINC_PROTEASE"/>
    <property type="match status" value="1"/>
</dbReference>
<accession>Q8MNZ1</accession>
<accession>Q8MNZ0</accession>
<feature type="signal peptide" evidence="3">
    <location>
        <begin position="1"/>
        <end position="41"/>
    </location>
</feature>
<feature type="propeptide" id="PRO_0000028672" description="Activation peptide" evidence="2">
    <location>
        <begin position="42"/>
        <end position="102"/>
    </location>
</feature>
<feature type="chain" id="PRO_0000028673" description="Leishmanolysin">
    <location>
        <begin position="103"/>
        <end position="657"/>
    </location>
</feature>
<feature type="topological domain" description="Extracellular" evidence="6">
    <location>
        <begin position="44"/>
        <end position="611"/>
    </location>
</feature>
<feature type="transmembrane region" description="Helical" evidence="3">
    <location>
        <begin position="612"/>
        <end position="632"/>
    </location>
</feature>
<feature type="topological domain" description="Cytoplasmic" evidence="6">
    <location>
        <begin position="633"/>
        <end position="657"/>
    </location>
</feature>
<feature type="active site" evidence="5">
    <location>
        <position position="267"/>
    </location>
</feature>
<feature type="binding site" evidence="5">
    <location>
        <position position="266"/>
    </location>
    <ligand>
        <name>Zn(2+)</name>
        <dbReference type="ChEBI" id="CHEBI:29105"/>
        <note>catalytic</note>
    </ligand>
</feature>
<feature type="binding site" evidence="5">
    <location>
        <position position="270"/>
    </location>
    <ligand>
        <name>Zn(2+)</name>
        <dbReference type="ChEBI" id="CHEBI:29105"/>
        <note>catalytic</note>
    </ligand>
</feature>
<feature type="binding site" evidence="5">
    <location>
        <position position="336"/>
    </location>
    <ligand>
        <name>Zn(2+)</name>
        <dbReference type="ChEBI" id="CHEBI:29105"/>
        <note>catalytic</note>
    </ligand>
</feature>
<feature type="glycosylation site" description="N-linked (GlcNAc...) asparagine" evidence="4">
    <location>
        <position position="107"/>
    </location>
</feature>
<feature type="glycosylation site" description="N-linked (GlcNAc...) asparagine" evidence="4">
    <location>
        <position position="302"/>
    </location>
</feature>
<feature type="glycosylation site" description="N-linked (GlcNAc...) asparagine" evidence="4">
    <location>
        <position position="399"/>
    </location>
</feature>
<feature type="glycosylation site" description="N-linked (GlcNAc...) asparagine" evidence="4">
    <location>
        <position position="409"/>
    </location>
</feature>
<feature type="glycosylation site" description="N-linked (GlcNAc...) asparagine" evidence="4">
    <location>
        <position position="445"/>
    </location>
</feature>
<feature type="glycosylation site" description="N-linked (GlcNAc...) asparagine" evidence="4">
    <location>
        <position position="466"/>
    </location>
</feature>
<feature type="glycosylation site" description="N-linked (GlcNAc...) asparagine" evidence="4">
    <location>
        <position position="501"/>
    </location>
</feature>
<feature type="disulfide bond" evidence="2">
    <location>
        <begin position="127"/>
        <end position="144"/>
    </location>
</feature>
<feature type="disulfide bond" evidence="2">
    <location>
        <begin position="193"/>
        <end position="232"/>
    </location>
</feature>
<feature type="disulfide bond" evidence="2">
    <location>
        <begin position="316"/>
        <end position="388"/>
    </location>
</feature>
<feature type="disulfide bond" evidence="2">
    <location>
        <begin position="395"/>
        <end position="458"/>
    </location>
</feature>
<feature type="disulfide bond" evidence="2">
    <location>
        <begin position="408"/>
        <end position="427"/>
    </location>
</feature>
<feature type="disulfide bond" evidence="2">
    <location>
        <begin position="417"/>
        <end position="492"/>
    </location>
</feature>
<feature type="disulfide bond" evidence="2">
    <location>
        <begin position="469"/>
        <end position="513"/>
    </location>
</feature>
<feature type="disulfide bond" evidence="2">
    <location>
        <begin position="518"/>
        <end position="568"/>
    </location>
</feature>
<feature type="disulfide bond" evidence="2">
    <location>
        <begin position="538"/>
        <end position="561"/>
    </location>
</feature>
<feature type="sequence variant" description="In allele mspCLtA2.">
    <location>
        <begin position="596"/>
        <end position="611"/>
    </location>
</feature>
<protein>
    <recommendedName>
        <fullName>Leishmanolysin</fullName>
        <ecNumber>3.4.24.36</ecNumber>
    </recommendedName>
    <alternativeName>
        <fullName>Cell surface protease</fullName>
    </alternativeName>
    <alternativeName>
        <fullName>Major surface glycoprotein</fullName>
    </alternativeName>
    <alternativeName>
        <fullName>Major surface protease</fullName>
    </alternativeName>
    <alternativeName>
        <fullName>Promastigote surface endopeptidase</fullName>
    </alternativeName>
    <alternativeName>
        <fullName>Protein gp63</fullName>
    </alternativeName>
</protein>
<organism>
    <name type="scientific">Leishmania tropica</name>
    <dbReference type="NCBI Taxonomy" id="5666"/>
    <lineage>
        <taxon>Eukaryota</taxon>
        <taxon>Discoba</taxon>
        <taxon>Euglenozoa</taxon>
        <taxon>Kinetoplastea</taxon>
        <taxon>Metakinetoplastina</taxon>
        <taxon>Trypanosomatida</taxon>
        <taxon>Trypanosomatidae</taxon>
        <taxon>Leishmaniinae</taxon>
        <taxon>Leishmania</taxon>
    </lineage>
</organism>
<sequence length="657" mass="70343">MSVDSSSSSTHRRRCVAARLVRLAAAGAAVTVAVGTAAAWAHAGALQHRCIHDAMQARVRQSVARHHTAPGAVSAVGLPYVTLDAAHTAAAADPRPGSAPTVVRAANWSTLRVAVSTEDLTDPAYHCARVGQRVNNHAGAIVTCTAEDILTDEKRDILRKYLIPQALQLHTERLKARQVQGKWKVTGMVDEICGDFKVPQAHITEGFSNTDFVMYVASVPSEEGVLAWATTCQVFSDGHPAVGVINIPAANIASRYDQLVTRVVTHEMAHALGFSEEFFTAARIVAHVSNVRHKTLKVPVVNSSTAVAKAREQYGCGTLEYLEIEDQGGAGSAGSHIKMRNAQDELMAPAAAGGYYTALTMAVFQDLGFYQADFNKAKVMPWGRNAGCAFLSEKCMEQNITKWRAMFCNESEDVMRCPTSRLSLGTCGIRGYRPPLPRYWQYFTNASLGGYSPFMDYCPVVIGYANGSCNQDASSAAEFLAAFNVFSEAARCIDGAFTPKNRTAADGYYAGLCANVRCDTATRTYSVQVRGSMDYVSCTPGLRVELSTVSNAFEEGGCITCPPYVEVCQGNVKGAKDFAGDSDSSSSADDAAGKAAMLRWNDRMVGLATAATVLLGMVLSLMALVVVWLLLVSCPWWCCKLGGPPASVTPACSPETE</sequence>
<reference key="1">
    <citation type="submission" date="2002-07" db="EMBL/GenBank/DDBJ databases">
        <title>Genetic diversity in the Leishmania donovani complex.</title>
        <authorList>
            <person name="Mauricio I.L."/>
            <person name="Stothard J.R."/>
            <person name="Miles M.A."/>
        </authorList>
    </citation>
    <scope>NUCLEOTIDE SEQUENCE [GENOMIC DNA] (ALLELES MSPCLTA1 AND MSPCLTA2)</scope>
    <source>
        <strain>MHOM/SU/1974/K27</strain>
    </source>
</reference>
<proteinExistence type="inferred from homology"/>
<keyword id="KW-0130">Cell adhesion</keyword>
<keyword id="KW-1015">Disulfide bond</keyword>
<keyword id="KW-0325">Glycoprotein</keyword>
<keyword id="KW-0378">Hydrolase</keyword>
<keyword id="KW-0472">Membrane</keyword>
<keyword id="KW-0479">Metal-binding</keyword>
<keyword id="KW-0482">Metalloprotease</keyword>
<keyword id="KW-0645">Protease</keyword>
<keyword id="KW-0732">Signal</keyword>
<keyword id="KW-0812">Transmembrane</keyword>
<keyword id="KW-1133">Transmembrane helix</keyword>
<keyword id="KW-0862">Zinc</keyword>
<keyword id="KW-0865">Zymogen</keyword>
<comment type="function">
    <text evidence="1">Has an integral role during the infection of macrophages in the mammalian host.</text>
</comment>
<comment type="catalytic activity">
    <reaction>
        <text>Preference for hydrophobic residues at P1 and P1' and basic residues at P2' and P3'. A model nonapeptide is cleaved at -Ala-Tyr-|-Leu-Lys-Lys-.</text>
        <dbReference type="EC" id="3.4.24.36"/>
    </reaction>
</comment>
<comment type="cofactor">
    <cofactor evidence="2">
        <name>Zn(2+)</name>
        <dbReference type="ChEBI" id="CHEBI:29105"/>
    </cofactor>
    <text evidence="2">Binds 1 zinc ion per subunit.</text>
</comment>
<comment type="subcellular location">
    <subcellularLocation>
        <location evidence="3">Membrane</location>
        <topology evidence="3">Single-pass membrane protein</topology>
    </subcellularLocation>
</comment>
<comment type="similarity">
    <text evidence="6">Belongs to the peptidase M8 family.</text>
</comment>
<evidence type="ECO:0000250" key="1"/>
<evidence type="ECO:0000250" key="2">
    <source>
        <dbReference type="UniProtKB" id="P08148"/>
    </source>
</evidence>
<evidence type="ECO:0000255" key="3"/>
<evidence type="ECO:0000255" key="4">
    <source>
        <dbReference type="PROSITE-ProRule" id="PRU00498"/>
    </source>
</evidence>
<evidence type="ECO:0000255" key="5">
    <source>
        <dbReference type="PROSITE-ProRule" id="PRU10095"/>
    </source>
</evidence>
<evidence type="ECO:0000305" key="6"/>
<name>GP63_LEITR</name>